<sequence>MAIISSKKQPPEPNGEPKQRRESAKAPSTENILKPEAAIDEQEQQEEGIRPHRFADYIGQKDLKDVLDIAIKAAKSRGEVLDHLLLYGPPGLGKTTMAMILASEMGVNYKITSAPALERPRDIVGLLVNMKPGDILFVDEIHRLSRMTEEILYPAMEDYRLDITIGKGSSARIRSLPLSKFTLVGATTRVGALTSPLRDRFGLIQKLRFYEVDELTQIVLRTAQLLKTPVTQDGATEIARRSRGTPRIANRLLKRVRDYAEVKVSGVINESIASEALQLFQVDPCGLDWTDRQMLSVIIEQFNGGPVGLETMAAATGEDTQTIEEVYEPYLMQIGYLTRTHRGRMATKAAYKHLGFTPPNEQLSLL</sequence>
<comment type="function">
    <text evidence="1">The RuvA-RuvB-RuvC complex processes Holliday junction (HJ) DNA during genetic recombination and DNA repair, while the RuvA-RuvB complex plays an important role in the rescue of blocked DNA replication forks via replication fork reversal (RFR). RuvA specifically binds to HJ cruciform DNA, conferring on it an open structure. The RuvB hexamer acts as an ATP-dependent pump, pulling dsDNA into and through the RuvAB complex. RuvB forms 2 homohexamers on either side of HJ DNA bound by 1 or 2 RuvA tetramers; 4 subunits per hexamer contact DNA at a time. Coordinated motions by a converter formed by DNA-disengaged RuvB subunits stimulates ATP hydrolysis and nucleotide exchange. Immobilization of the converter enables RuvB to convert the ATP-contained energy into a lever motion, pulling 2 nucleotides of DNA out of the RuvA tetramer per ATP hydrolyzed, thus driving DNA branch migration. The RuvB motors rotate together with the DNA substrate, which together with the progressing nucleotide cycle form the mechanistic basis for DNA recombination by continuous HJ branch migration. Branch migration allows RuvC to scan DNA until it finds its consensus sequence, where it cleaves and resolves cruciform DNA.</text>
</comment>
<comment type="catalytic activity">
    <reaction evidence="1">
        <text>ATP + H2O = ADP + phosphate + H(+)</text>
        <dbReference type="Rhea" id="RHEA:13065"/>
        <dbReference type="ChEBI" id="CHEBI:15377"/>
        <dbReference type="ChEBI" id="CHEBI:15378"/>
        <dbReference type="ChEBI" id="CHEBI:30616"/>
        <dbReference type="ChEBI" id="CHEBI:43474"/>
        <dbReference type="ChEBI" id="CHEBI:456216"/>
    </reaction>
</comment>
<comment type="subunit">
    <text evidence="1">Homohexamer. Forms an RuvA(8)-RuvB(12)-Holliday junction (HJ) complex. HJ DNA is sandwiched between 2 RuvA tetramers; dsDNA enters through RuvA and exits via RuvB. An RuvB hexamer assembles on each DNA strand where it exits the tetramer. Each RuvB hexamer is contacted by two RuvA subunits (via domain III) on 2 adjacent RuvB subunits; this complex drives branch migration. In the full resolvosome a probable DNA-RuvA(4)-RuvB(12)-RuvC(2) complex forms which resolves the HJ.</text>
</comment>
<comment type="subcellular location">
    <subcellularLocation>
        <location evidence="1">Cytoplasm</location>
    </subcellularLocation>
</comment>
<comment type="domain">
    <text evidence="1">Has 3 domains, the large (RuvB-L) and small ATPase (RuvB-S) domains and the C-terminal head (RuvB-H) domain. The head domain binds DNA, while the ATPase domains jointly bind ATP, ADP or are empty depending on the state of the subunit in the translocation cycle. During a single DNA translocation step the structure of each domain remains the same, but their relative positions change.</text>
</comment>
<comment type="similarity">
    <text evidence="1">Belongs to the RuvB family.</text>
</comment>
<reference key="1">
    <citation type="journal article" date="2013" name="Plant Physiol.">
        <title>A Nostoc punctiforme Sugar Transporter Necessary to Establish a Cyanobacterium-Plant Symbiosis.</title>
        <authorList>
            <person name="Ekman M."/>
            <person name="Picossi S."/>
            <person name="Campbell E.L."/>
            <person name="Meeks J.C."/>
            <person name="Flores E."/>
        </authorList>
    </citation>
    <scope>NUCLEOTIDE SEQUENCE [LARGE SCALE GENOMIC DNA]</scope>
    <source>
        <strain>ATCC 29133 / PCC 73102</strain>
    </source>
</reference>
<feature type="chain" id="PRO_1000089659" description="Holliday junction branch migration complex subunit RuvB">
    <location>
        <begin position="1"/>
        <end position="366"/>
    </location>
</feature>
<feature type="region of interest" description="Disordered" evidence="2">
    <location>
        <begin position="1"/>
        <end position="50"/>
    </location>
</feature>
<feature type="region of interest" description="Large ATPase domain (RuvB-L)" evidence="1">
    <location>
        <begin position="13"/>
        <end position="210"/>
    </location>
</feature>
<feature type="region of interest" description="Small ATPAse domain (RuvB-S)" evidence="1">
    <location>
        <begin position="211"/>
        <end position="281"/>
    </location>
</feature>
<feature type="region of interest" description="Head domain (RuvB-H)" evidence="1">
    <location>
        <begin position="284"/>
        <end position="366"/>
    </location>
</feature>
<feature type="compositionally biased region" description="Basic and acidic residues" evidence="2">
    <location>
        <begin position="15"/>
        <end position="24"/>
    </location>
</feature>
<feature type="binding site" evidence="1">
    <location>
        <position position="49"/>
    </location>
    <ligand>
        <name>ATP</name>
        <dbReference type="ChEBI" id="CHEBI:30616"/>
    </ligand>
</feature>
<feature type="binding site" evidence="1">
    <location>
        <position position="50"/>
    </location>
    <ligand>
        <name>ATP</name>
        <dbReference type="ChEBI" id="CHEBI:30616"/>
    </ligand>
</feature>
<feature type="binding site" evidence="1">
    <location>
        <position position="91"/>
    </location>
    <ligand>
        <name>ATP</name>
        <dbReference type="ChEBI" id="CHEBI:30616"/>
    </ligand>
</feature>
<feature type="binding site" evidence="1">
    <location>
        <position position="94"/>
    </location>
    <ligand>
        <name>ATP</name>
        <dbReference type="ChEBI" id="CHEBI:30616"/>
    </ligand>
</feature>
<feature type="binding site" evidence="1">
    <location>
        <position position="95"/>
    </location>
    <ligand>
        <name>ATP</name>
        <dbReference type="ChEBI" id="CHEBI:30616"/>
    </ligand>
</feature>
<feature type="binding site" evidence="1">
    <location>
        <position position="95"/>
    </location>
    <ligand>
        <name>Mg(2+)</name>
        <dbReference type="ChEBI" id="CHEBI:18420"/>
    </ligand>
</feature>
<feature type="binding site" evidence="1">
    <location>
        <position position="96"/>
    </location>
    <ligand>
        <name>ATP</name>
        <dbReference type="ChEBI" id="CHEBI:30616"/>
    </ligand>
</feature>
<feature type="binding site" evidence="1">
    <location>
        <begin position="157"/>
        <end position="159"/>
    </location>
    <ligand>
        <name>ATP</name>
        <dbReference type="ChEBI" id="CHEBI:30616"/>
    </ligand>
</feature>
<feature type="binding site" evidence="1">
    <location>
        <position position="200"/>
    </location>
    <ligand>
        <name>ATP</name>
        <dbReference type="ChEBI" id="CHEBI:30616"/>
    </ligand>
</feature>
<feature type="binding site" evidence="1">
    <location>
        <position position="210"/>
    </location>
    <ligand>
        <name>ATP</name>
        <dbReference type="ChEBI" id="CHEBI:30616"/>
    </ligand>
</feature>
<feature type="binding site" evidence="1">
    <location>
        <position position="247"/>
    </location>
    <ligand>
        <name>ATP</name>
        <dbReference type="ChEBI" id="CHEBI:30616"/>
    </ligand>
</feature>
<feature type="binding site" evidence="1">
    <location>
        <position position="339"/>
    </location>
    <ligand>
        <name>DNA</name>
        <dbReference type="ChEBI" id="CHEBI:16991"/>
    </ligand>
</feature>
<feature type="binding site" evidence="1">
    <location>
        <position position="344"/>
    </location>
    <ligand>
        <name>DNA</name>
        <dbReference type="ChEBI" id="CHEBI:16991"/>
    </ligand>
</feature>
<organism>
    <name type="scientific">Nostoc punctiforme (strain ATCC 29133 / PCC 73102)</name>
    <dbReference type="NCBI Taxonomy" id="63737"/>
    <lineage>
        <taxon>Bacteria</taxon>
        <taxon>Bacillati</taxon>
        <taxon>Cyanobacteriota</taxon>
        <taxon>Cyanophyceae</taxon>
        <taxon>Nostocales</taxon>
        <taxon>Nostocaceae</taxon>
        <taxon>Nostoc</taxon>
    </lineage>
</organism>
<gene>
    <name evidence="1" type="primary">ruvB</name>
    <name type="ordered locus">Npun_F4406</name>
</gene>
<name>RUVB_NOSP7</name>
<evidence type="ECO:0000255" key="1">
    <source>
        <dbReference type="HAMAP-Rule" id="MF_00016"/>
    </source>
</evidence>
<evidence type="ECO:0000256" key="2">
    <source>
        <dbReference type="SAM" id="MobiDB-lite"/>
    </source>
</evidence>
<proteinExistence type="inferred from homology"/>
<keyword id="KW-0067">ATP-binding</keyword>
<keyword id="KW-0963">Cytoplasm</keyword>
<keyword id="KW-0227">DNA damage</keyword>
<keyword id="KW-0233">DNA recombination</keyword>
<keyword id="KW-0234">DNA repair</keyword>
<keyword id="KW-0238">DNA-binding</keyword>
<keyword id="KW-0378">Hydrolase</keyword>
<keyword id="KW-0547">Nucleotide-binding</keyword>
<keyword id="KW-1185">Reference proteome</keyword>
<protein>
    <recommendedName>
        <fullName evidence="1">Holliday junction branch migration complex subunit RuvB</fullName>
        <ecNumber evidence="1">3.6.4.-</ecNumber>
    </recommendedName>
</protein>
<dbReference type="EC" id="3.6.4.-" evidence="1"/>
<dbReference type="EMBL" id="CP001037">
    <property type="protein sequence ID" value="ACC82777.1"/>
    <property type="molecule type" value="Genomic_DNA"/>
</dbReference>
<dbReference type="RefSeq" id="WP_012410738.1">
    <property type="nucleotide sequence ID" value="NC_010628.1"/>
</dbReference>
<dbReference type="SMR" id="B2ITR9"/>
<dbReference type="STRING" id="63737.Npun_F4406"/>
<dbReference type="EnsemblBacteria" id="ACC82777">
    <property type="protein sequence ID" value="ACC82777"/>
    <property type="gene ID" value="Npun_F4406"/>
</dbReference>
<dbReference type="KEGG" id="npu:Npun_F4406"/>
<dbReference type="eggNOG" id="COG2255">
    <property type="taxonomic scope" value="Bacteria"/>
</dbReference>
<dbReference type="HOGENOM" id="CLU_055599_1_0_3"/>
<dbReference type="OrthoDB" id="9804478at2"/>
<dbReference type="PhylomeDB" id="B2ITR9"/>
<dbReference type="Proteomes" id="UP000001191">
    <property type="component" value="Chromosome"/>
</dbReference>
<dbReference type="GO" id="GO:0005737">
    <property type="term" value="C:cytoplasm"/>
    <property type="evidence" value="ECO:0007669"/>
    <property type="project" value="UniProtKB-SubCell"/>
</dbReference>
<dbReference type="GO" id="GO:0048476">
    <property type="term" value="C:Holliday junction resolvase complex"/>
    <property type="evidence" value="ECO:0007669"/>
    <property type="project" value="UniProtKB-UniRule"/>
</dbReference>
<dbReference type="GO" id="GO:0005524">
    <property type="term" value="F:ATP binding"/>
    <property type="evidence" value="ECO:0007669"/>
    <property type="project" value="UniProtKB-UniRule"/>
</dbReference>
<dbReference type="GO" id="GO:0016887">
    <property type="term" value="F:ATP hydrolysis activity"/>
    <property type="evidence" value="ECO:0007669"/>
    <property type="project" value="InterPro"/>
</dbReference>
<dbReference type="GO" id="GO:0000400">
    <property type="term" value="F:four-way junction DNA binding"/>
    <property type="evidence" value="ECO:0007669"/>
    <property type="project" value="UniProtKB-UniRule"/>
</dbReference>
<dbReference type="GO" id="GO:0009378">
    <property type="term" value="F:four-way junction helicase activity"/>
    <property type="evidence" value="ECO:0007669"/>
    <property type="project" value="InterPro"/>
</dbReference>
<dbReference type="GO" id="GO:0006310">
    <property type="term" value="P:DNA recombination"/>
    <property type="evidence" value="ECO:0007669"/>
    <property type="project" value="UniProtKB-UniRule"/>
</dbReference>
<dbReference type="GO" id="GO:0006281">
    <property type="term" value="P:DNA repair"/>
    <property type="evidence" value="ECO:0007669"/>
    <property type="project" value="UniProtKB-UniRule"/>
</dbReference>
<dbReference type="CDD" id="cd00009">
    <property type="entry name" value="AAA"/>
    <property type="match status" value="1"/>
</dbReference>
<dbReference type="Gene3D" id="1.10.8.60">
    <property type="match status" value="1"/>
</dbReference>
<dbReference type="Gene3D" id="3.40.50.300">
    <property type="entry name" value="P-loop containing nucleotide triphosphate hydrolases"/>
    <property type="match status" value="1"/>
</dbReference>
<dbReference type="Gene3D" id="1.10.10.10">
    <property type="entry name" value="Winged helix-like DNA-binding domain superfamily/Winged helix DNA-binding domain"/>
    <property type="match status" value="1"/>
</dbReference>
<dbReference type="HAMAP" id="MF_00016">
    <property type="entry name" value="DNA_HJ_migration_RuvB"/>
    <property type="match status" value="1"/>
</dbReference>
<dbReference type="InterPro" id="IPR003593">
    <property type="entry name" value="AAA+_ATPase"/>
</dbReference>
<dbReference type="InterPro" id="IPR041445">
    <property type="entry name" value="AAA_lid_4"/>
</dbReference>
<dbReference type="InterPro" id="IPR004605">
    <property type="entry name" value="DNA_helicase_Holl-junc_RuvB"/>
</dbReference>
<dbReference type="InterPro" id="IPR027417">
    <property type="entry name" value="P-loop_NTPase"/>
</dbReference>
<dbReference type="InterPro" id="IPR008824">
    <property type="entry name" value="RuvB-like_N"/>
</dbReference>
<dbReference type="InterPro" id="IPR008823">
    <property type="entry name" value="RuvB_C"/>
</dbReference>
<dbReference type="InterPro" id="IPR036388">
    <property type="entry name" value="WH-like_DNA-bd_sf"/>
</dbReference>
<dbReference type="InterPro" id="IPR036390">
    <property type="entry name" value="WH_DNA-bd_sf"/>
</dbReference>
<dbReference type="NCBIfam" id="NF000868">
    <property type="entry name" value="PRK00080.1"/>
    <property type="match status" value="1"/>
</dbReference>
<dbReference type="NCBIfam" id="TIGR00635">
    <property type="entry name" value="ruvB"/>
    <property type="match status" value="1"/>
</dbReference>
<dbReference type="PANTHER" id="PTHR42848">
    <property type="match status" value="1"/>
</dbReference>
<dbReference type="PANTHER" id="PTHR42848:SF1">
    <property type="entry name" value="HOLLIDAY JUNCTION BRANCH MIGRATION COMPLEX SUBUNIT RUVB"/>
    <property type="match status" value="1"/>
</dbReference>
<dbReference type="Pfam" id="PF17864">
    <property type="entry name" value="AAA_lid_4"/>
    <property type="match status" value="1"/>
</dbReference>
<dbReference type="Pfam" id="PF05491">
    <property type="entry name" value="RuvB_C"/>
    <property type="match status" value="1"/>
</dbReference>
<dbReference type="Pfam" id="PF05496">
    <property type="entry name" value="RuvB_N"/>
    <property type="match status" value="1"/>
</dbReference>
<dbReference type="SMART" id="SM00382">
    <property type="entry name" value="AAA"/>
    <property type="match status" value="1"/>
</dbReference>
<dbReference type="SUPFAM" id="SSF52540">
    <property type="entry name" value="P-loop containing nucleoside triphosphate hydrolases"/>
    <property type="match status" value="1"/>
</dbReference>
<dbReference type="SUPFAM" id="SSF46785">
    <property type="entry name" value="Winged helix' DNA-binding domain"/>
    <property type="match status" value="1"/>
</dbReference>
<accession>B2ITR9</accession>